<comment type="function">
    <text evidence="1">Specifically methylates the guanine in position 1207 of 16S rRNA in the 30S particle.</text>
</comment>
<comment type="catalytic activity">
    <reaction evidence="1">
        <text>guanosine(1207) in 16S rRNA + S-adenosyl-L-methionine = N(2)-methylguanosine(1207) in 16S rRNA + S-adenosyl-L-homocysteine + H(+)</text>
        <dbReference type="Rhea" id="RHEA:42736"/>
        <dbReference type="Rhea" id="RHEA-COMP:10213"/>
        <dbReference type="Rhea" id="RHEA-COMP:10214"/>
        <dbReference type="ChEBI" id="CHEBI:15378"/>
        <dbReference type="ChEBI" id="CHEBI:57856"/>
        <dbReference type="ChEBI" id="CHEBI:59789"/>
        <dbReference type="ChEBI" id="CHEBI:74269"/>
        <dbReference type="ChEBI" id="CHEBI:74481"/>
        <dbReference type="EC" id="2.1.1.172"/>
    </reaction>
</comment>
<comment type="subunit">
    <text evidence="1">Monomer.</text>
</comment>
<comment type="subcellular location">
    <subcellularLocation>
        <location evidence="1">Cytoplasm</location>
    </subcellularLocation>
</comment>
<comment type="similarity">
    <text evidence="1">Belongs to the methyltransferase superfamily. RsmC family.</text>
</comment>
<proteinExistence type="inferred from homology"/>
<keyword id="KW-0963">Cytoplasm</keyword>
<keyword id="KW-0489">Methyltransferase</keyword>
<keyword id="KW-0698">rRNA processing</keyword>
<keyword id="KW-0949">S-adenosyl-L-methionine</keyword>
<keyword id="KW-0808">Transferase</keyword>
<feature type="chain" id="PRO_0000369753" description="Ribosomal RNA small subunit methyltransferase C">
    <location>
        <begin position="1"/>
        <end position="342"/>
    </location>
</feature>
<name>RSMC_SALCH</name>
<accession>Q57G51</accession>
<reference key="1">
    <citation type="journal article" date="2005" name="Nucleic Acids Res.">
        <title>The genome sequence of Salmonella enterica serovar Choleraesuis, a highly invasive and resistant zoonotic pathogen.</title>
        <authorList>
            <person name="Chiu C.-H."/>
            <person name="Tang P."/>
            <person name="Chu C."/>
            <person name="Hu S."/>
            <person name="Bao Q."/>
            <person name="Yu J."/>
            <person name="Chou Y.-Y."/>
            <person name="Wang H.-S."/>
            <person name="Lee Y.-S."/>
        </authorList>
    </citation>
    <scope>NUCLEOTIDE SEQUENCE [LARGE SCALE GENOMIC DNA]</scope>
    <source>
        <strain>SC-B67</strain>
    </source>
</reference>
<evidence type="ECO:0000255" key="1">
    <source>
        <dbReference type="HAMAP-Rule" id="MF_01862"/>
    </source>
</evidence>
<organism>
    <name type="scientific">Salmonella choleraesuis (strain SC-B67)</name>
    <dbReference type="NCBI Taxonomy" id="321314"/>
    <lineage>
        <taxon>Bacteria</taxon>
        <taxon>Pseudomonadati</taxon>
        <taxon>Pseudomonadota</taxon>
        <taxon>Gammaproteobacteria</taxon>
        <taxon>Enterobacterales</taxon>
        <taxon>Enterobacteriaceae</taxon>
        <taxon>Salmonella</taxon>
    </lineage>
</organism>
<dbReference type="EC" id="2.1.1.172" evidence="1"/>
<dbReference type="EMBL" id="AE017220">
    <property type="protein sequence ID" value="AAX68311.1"/>
    <property type="molecule type" value="Genomic_DNA"/>
</dbReference>
<dbReference type="RefSeq" id="WP_001541483.1">
    <property type="nucleotide sequence ID" value="NC_006905.1"/>
</dbReference>
<dbReference type="SMR" id="Q57G51"/>
<dbReference type="KEGG" id="sec:SCH_4405"/>
<dbReference type="HOGENOM" id="CLU_049581_0_1_6"/>
<dbReference type="Proteomes" id="UP000000538">
    <property type="component" value="Chromosome"/>
</dbReference>
<dbReference type="GO" id="GO:0005737">
    <property type="term" value="C:cytoplasm"/>
    <property type="evidence" value="ECO:0007669"/>
    <property type="project" value="UniProtKB-SubCell"/>
</dbReference>
<dbReference type="GO" id="GO:0052914">
    <property type="term" value="F:16S rRNA (guanine(1207)-N(2))-methyltransferase activity"/>
    <property type="evidence" value="ECO:0007669"/>
    <property type="project" value="UniProtKB-EC"/>
</dbReference>
<dbReference type="GO" id="GO:0003676">
    <property type="term" value="F:nucleic acid binding"/>
    <property type="evidence" value="ECO:0007669"/>
    <property type="project" value="InterPro"/>
</dbReference>
<dbReference type="CDD" id="cd02440">
    <property type="entry name" value="AdoMet_MTases"/>
    <property type="match status" value="1"/>
</dbReference>
<dbReference type="FunFam" id="3.40.50.150:FF:000058">
    <property type="entry name" value="Ribosomal RNA small subunit methyltransferase C"/>
    <property type="match status" value="1"/>
</dbReference>
<dbReference type="Gene3D" id="3.40.50.150">
    <property type="entry name" value="Vaccinia Virus protein VP39"/>
    <property type="match status" value="2"/>
</dbReference>
<dbReference type="HAMAP" id="MF_01862">
    <property type="entry name" value="16SrRNA_methyltr_C"/>
    <property type="match status" value="1"/>
</dbReference>
<dbReference type="InterPro" id="IPR002052">
    <property type="entry name" value="DNA_methylase_N6_adenine_CS"/>
</dbReference>
<dbReference type="InterPro" id="IPR013675">
    <property type="entry name" value="Mtase_sm_N"/>
</dbReference>
<dbReference type="InterPro" id="IPR023543">
    <property type="entry name" value="rRNA_ssu_MeTfrase_C"/>
</dbReference>
<dbReference type="InterPro" id="IPR046977">
    <property type="entry name" value="RsmC/RlmG"/>
</dbReference>
<dbReference type="InterPro" id="IPR029063">
    <property type="entry name" value="SAM-dependent_MTases_sf"/>
</dbReference>
<dbReference type="InterPro" id="IPR007848">
    <property type="entry name" value="Small_mtfrase_dom"/>
</dbReference>
<dbReference type="NCBIfam" id="NF007023">
    <property type="entry name" value="PRK09489.1"/>
    <property type="match status" value="1"/>
</dbReference>
<dbReference type="PANTHER" id="PTHR47816">
    <property type="entry name" value="RIBOSOMAL RNA SMALL SUBUNIT METHYLTRANSFERASE C"/>
    <property type="match status" value="1"/>
</dbReference>
<dbReference type="PANTHER" id="PTHR47816:SF4">
    <property type="entry name" value="RIBOSOMAL RNA SMALL SUBUNIT METHYLTRANSFERASE C"/>
    <property type="match status" value="1"/>
</dbReference>
<dbReference type="Pfam" id="PF05175">
    <property type="entry name" value="MTS"/>
    <property type="match status" value="1"/>
</dbReference>
<dbReference type="Pfam" id="PF08468">
    <property type="entry name" value="MTS_N"/>
    <property type="match status" value="1"/>
</dbReference>
<dbReference type="SUPFAM" id="SSF53335">
    <property type="entry name" value="S-adenosyl-L-methionine-dependent methyltransferases"/>
    <property type="match status" value="1"/>
</dbReference>
<gene>
    <name evidence="1" type="primary">rsmC</name>
    <name type="ordered locus">SCH_4405</name>
</gene>
<protein>
    <recommendedName>
        <fullName evidence="1">Ribosomal RNA small subunit methyltransferase C</fullName>
        <ecNumber evidence="1">2.1.1.172</ecNumber>
    </recommendedName>
    <alternativeName>
        <fullName evidence="1">16S rRNA m2G1207 methyltransferase</fullName>
    </alternativeName>
    <alternativeName>
        <fullName evidence="1">rRNA (guanine-N(2)-)-methyltransferase RsmC</fullName>
    </alternativeName>
</protein>
<sequence>MSAFTPASEVLLRHSDDFEQSRILFAGDLQDDLPALFECAASRAHTQQFHHWQVLSRQMGDNVRFSLVAQASDVADCDTLIYYWPKNKPEAQFQLMNILSLMPSGSDVFVVGENRSGVRSAEQMLADYAPLNKVDSARRCGLYHGRLEKQPQFSLESWWAEYNIDGLTIKTLPGVFSRDGLDVGSQLLLSTLTPHTKGKVLDVGCGAGVLSAALASHSPKARLTLCDVSAPAVEASRATLAANGLEGEVFASNVFSEVKGRFDMIISNPPFHDGMQTSLDAAQTLIRGAVRHLNSGGELRIVANAFLPYPKILDETFGFHEVIAQTGRFKVYRTVMTRQAKK</sequence>